<feature type="chain" id="PRO_0000233133" description="SH2 domain-containing protein 4A">
    <location>
        <begin position="1"/>
        <end position="454"/>
    </location>
</feature>
<feature type="domain" description="SH2" evidence="3">
    <location>
        <begin position="347"/>
        <end position="440"/>
    </location>
</feature>
<feature type="region of interest" description="Disordered" evidence="4">
    <location>
        <begin position="45"/>
        <end position="65"/>
    </location>
</feature>
<feature type="region of interest" description="Disordered" evidence="4">
    <location>
        <begin position="107"/>
        <end position="131"/>
    </location>
</feature>
<feature type="region of interest" description="Disordered" evidence="4">
    <location>
        <begin position="152"/>
        <end position="177"/>
    </location>
</feature>
<feature type="region of interest" description="Disordered" evidence="4">
    <location>
        <begin position="237"/>
        <end position="302"/>
    </location>
</feature>
<feature type="compositionally biased region" description="Basic and acidic residues" evidence="4">
    <location>
        <begin position="107"/>
        <end position="120"/>
    </location>
</feature>
<feature type="compositionally biased region" description="Basic and acidic residues" evidence="4">
    <location>
        <begin position="240"/>
        <end position="259"/>
    </location>
</feature>
<feature type="modified residue" description="Phosphoserine" evidence="2">
    <location>
        <position position="118"/>
    </location>
</feature>
<feature type="modified residue" description="Phosphoserine" evidence="16 17">
    <location>
        <position position="124"/>
    </location>
</feature>
<feature type="modified residue" description="Phosphoserine" evidence="14">
    <location>
        <position position="261"/>
    </location>
</feature>
<feature type="modified residue" description="Phosphoserine" evidence="12 13 14 15 16">
    <location>
        <position position="315"/>
    </location>
</feature>
<feature type="splice variant" id="VSP_042784" description="In isoform 2." evidence="10">
    <original>MLKQILSEMYIDPDLLAELSEEQKQILFFKMREEQIRRWKEREAAMERKESLPVKPRPKK</original>
    <variation>MWRVIEPPCPGAPST</variation>
    <location>
        <begin position="1"/>
        <end position="60"/>
    </location>
</feature>
<feature type="sequence variant" id="VAR_051350" description="In dbSNP:rs35647122." evidence="6">
    <original>E</original>
    <variation>G</variation>
    <location>
        <position position="209"/>
    </location>
</feature>
<feature type="sequence variant" id="VAR_026055" description="In dbSNP:rs4921637." evidence="6">
    <original>E</original>
    <variation>G</variation>
    <location>
        <position position="216"/>
    </location>
</feature>
<feature type="sequence variant" id="VAR_026056" description="In dbSNP:rs877386." evidence="6">
    <original>G</original>
    <variation>A</variation>
    <location>
        <position position="263"/>
    </location>
</feature>
<feature type="sequence variant" id="VAR_051351" description="In dbSNP:rs34608771." evidence="7">
    <original>S</original>
    <variation>N</variation>
    <location>
        <position position="275"/>
    </location>
</feature>
<feature type="sequence conflict" description="In Ref. 1; BAB14935." evidence="11" ref="1">
    <original>N</original>
    <variation>T</variation>
    <location>
        <position position="95"/>
    </location>
</feature>
<feature type="sequence conflict" description="In Ref. 4; AAO41715." evidence="11" ref="4">
    <original>N</original>
    <variation>T</variation>
    <location>
        <position position="179"/>
    </location>
</feature>
<feature type="sequence conflict" description="In Ref. 4; AAO41715." evidence="11" ref="4">
    <original>K</original>
    <variation>R</variation>
    <location>
        <position position="238"/>
    </location>
</feature>
<feature type="sequence conflict" description="In Ref. 4; AAO41715." evidence="11" ref="4">
    <original>A</original>
    <variation>V</variation>
    <location>
        <position position="253"/>
    </location>
</feature>
<feature type="sequence conflict" description="In Ref. 1; BAB14935." evidence="11" ref="1">
    <original>K</original>
    <variation>E</variation>
    <location>
        <position position="291"/>
    </location>
</feature>
<feature type="sequence conflict" description="In Ref. 4; AAO41715." evidence="11" ref="4">
    <original>P</original>
    <variation>S</variation>
    <location>
        <position position="346"/>
    </location>
</feature>
<feature type="sequence conflict" description="In Ref. 1; BAB14935." evidence="11" ref="1">
    <original>C</original>
    <variation>R</variation>
    <location>
        <position position="440"/>
    </location>
</feature>
<sequence length="454" mass="52727">MLKQILSEMYIDPDLLAELSEEQKQILFFKMREEQIRRWKEREAAMERKESLPVKPRPKKENGKSVHWKLGADKEVWVWVMGEHHLDKPYDVLCNEIIAERARLKAEQEAEEPRKTHSEEFTNSLKTKSQYHDLQAPDNQQTKDIWKKVAEKEELEQGSRPAPTLEEEKIRSLSSSSRNIQQMLADSINRMKAYAFHQKKESMKKKQDEEINQIEEERTKQICKSWKEDSEWQASLRKSKAADEKRRSLAKQAREDYKRLSLGAQKGRGGERLQSPLRVPQKPERPPLPPKPQFLNSGAYPQKPLRNQGVVRTLSSSAQEDIIRWFKEEQLPLRAGYQKTSDTIAPWFHGILTLKKANELLLSTGMPGSFLIRVSERIKGYALSYLSEDGCKHFLIDASADAYSFLGVDQLQHATLADLVEYHKEEPITSLGKELLLYPCGQQDQLPDYLELFE</sequence>
<comment type="function">
    <text evidence="8 9">Inhibits estrogen-induced cell proliferation by competing with PLCG for binding to ESR1, blocking the effect of estrogen on PLCG and repressing estrogen-induced proliferation. May play a role in T-cell development and function.</text>
</comment>
<comment type="subunit">
    <text evidence="9">Interacts with ESR1.</text>
</comment>
<comment type="interaction">
    <interactant intactId="EBI-747035">
        <id>Q9H788</id>
    </interactant>
    <interactant intactId="EBI-3905054">
        <id>P13196</id>
        <label>ALAS1</label>
    </interactant>
    <organismsDiffer>false</organismsDiffer>
    <experiments>3</experiments>
</comment>
<comment type="interaction">
    <interactant intactId="EBI-747035">
        <id>Q9H788</id>
    </interactant>
    <interactant intactId="EBI-750550">
        <id>Q7LC44</id>
        <label>ARC</label>
    </interactant>
    <organismsDiffer>false</organismsDiffer>
    <experiments>3</experiments>
</comment>
<comment type="interaction">
    <interactant intactId="EBI-747035">
        <id>Q9H788</id>
    </interactant>
    <interactant intactId="EBI-465872">
        <id>Q6QNY1</id>
        <label>BLOC1S2</label>
    </interactant>
    <organismsDiffer>false</organismsDiffer>
    <experiments>3</experiments>
</comment>
<comment type="interaction">
    <interactant intactId="EBI-747035">
        <id>Q9H788</id>
    </interactant>
    <interactant intactId="EBI-10179719">
        <id>A2RRN7</id>
        <label>CADPS</label>
    </interactant>
    <organismsDiffer>false</organismsDiffer>
    <experiments>3</experiments>
</comment>
<comment type="interaction">
    <interactant intactId="EBI-747035">
        <id>Q9H788</id>
    </interactant>
    <interactant intactId="EBI-1215506">
        <id>O14936</id>
        <label>CASK</label>
    </interactant>
    <organismsDiffer>false</organismsDiffer>
    <experiments>4</experiments>
</comment>
<comment type="interaction">
    <interactant intactId="EBI-747035">
        <id>Q9H788</id>
    </interactant>
    <interactant intactId="EBI-12007726">
        <id>O14936-4</id>
        <label>CASK</label>
    </interactant>
    <organismsDiffer>false</organismsDiffer>
    <experiments>3</experiments>
</comment>
<comment type="interaction">
    <interactant intactId="EBI-747035">
        <id>Q9H788</id>
    </interactant>
    <interactant intactId="EBI-2548868">
        <id>P0C7W6</id>
        <label>CCDC172</label>
    </interactant>
    <organismsDiffer>false</organismsDiffer>
    <experiments>3</experiments>
</comment>
<comment type="interaction">
    <interactant intactId="EBI-747035">
        <id>Q9H788</id>
    </interactant>
    <interactant intactId="EBI-347573">
        <id>A6NC98</id>
        <label>CCDC88B</label>
    </interactant>
    <organismsDiffer>false</organismsDiffer>
    <experiments>3</experiments>
</comment>
<comment type="interaction">
    <interactant intactId="EBI-747035">
        <id>Q9H788</id>
    </interactant>
    <interactant intactId="EBI-1181367">
        <id>Q01850</id>
        <label>CDR2</label>
    </interactant>
    <organismsDiffer>false</organismsDiffer>
    <experiments>6</experiments>
</comment>
<comment type="interaction">
    <interactant intactId="EBI-747035">
        <id>Q9H788</id>
    </interactant>
    <interactant intactId="EBI-11063830">
        <id>Q86X02</id>
        <label>CDR2L</label>
    </interactant>
    <organismsDiffer>false</organismsDiffer>
    <experiments>3</experiments>
</comment>
<comment type="interaction">
    <interactant intactId="EBI-747035">
        <id>Q9H788</id>
    </interactant>
    <interactant intactId="EBI-739624">
        <id>Q8NHQ1</id>
        <label>CEP70</label>
    </interactant>
    <organismsDiffer>false</organismsDiffer>
    <experiments>3</experiments>
</comment>
<comment type="interaction">
    <interactant intactId="EBI-747035">
        <id>Q9H788</id>
    </interactant>
    <interactant intactId="EBI-742887">
        <id>Q8TAP6</id>
        <label>CEP76</label>
    </interactant>
    <organismsDiffer>false</organismsDiffer>
    <experiments>3</experiments>
</comment>
<comment type="interaction">
    <interactant intactId="EBI-747035">
        <id>Q9H788</id>
    </interactant>
    <interactant intactId="EBI-742422">
        <id>Q96M91</id>
        <label>CFAP53</label>
    </interactant>
    <organismsDiffer>false</organismsDiffer>
    <experiments>3</experiments>
</comment>
<comment type="interaction">
    <interactant intactId="EBI-747035">
        <id>Q9H788</id>
    </interactant>
    <interactant intactId="EBI-751783">
        <id>Q9UJU6</id>
        <label>DBNL</label>
    </interactant>
    <organismsDiffer>false</organismsDiffer>
    <experiments>6</experiments>
</comment>
<comment type="interaction">
    <interactant intactId="EBI-747035">
        <id>Q9H788</id>
    </interactant>
    <interactant intactId="EBI-12192777">
        <id>Q9UJU6-2</id>
        <label>DBNL</label>
    </interactant>
    <organismsDiffer>false</organismsDiffer>
    <experiments>3</experiments>
</comment>
<comment type="interaction">
    <interactant intactId="EBI-747035">
        <id>Q9H788</id>
    </interactant>
    <interactant intactId="EBI-11977403">
        <id>A0A0C3SFZ9</id>
        <label>FCHO1</label>
    </interactant>
    <organismsDiffer>false</organismsDiffer>
    <experiments>3</experiments>
</comment>
<comment type="interaction">
    <interactant intactId="EBI-747035">
        <id>Q9H788</id>
    </interactant>
    <interactant intactId="EBI-11958845">
        <id>O94868-3</id>
        <label>FCHSD2</label>
    </interactant>
    <organismsDiffer>false</organismsDiffer>
    <experiments>5</experiments>
</comment>
<comment type="interaction">
    <interactant intactId="EBI-747035">
        <id>Q9H788</id>
    </interactant>
    <interactant intactId="EBI-5661036">
        <id>A1L4K1</id>
        <label>FSD2</label>
    </interactant>
    <organismsDiffer>false</organismsDiffer>
    <experiments>6</experiments>
</comment>
<comment type="interaction">
    <interactant intactId="EBI-747035">
        <id>Q9H788</id>
    </interactant>
    <interactant intactId="EBI-618309">
        <id>Q08379</id>
        <label>GOLGA2</label>
    </interactant>
    <organismsDiffer>false</organismsDiffer>
    <experiments>6</experiments>
</comment>
<comment type="interaction">
    <interactant intactId="EBI-747035">
        <id>Q9H788</id>
    </interactant>
    <interactant intactId="EBI-5916454">
        <id>A6NEM1</id>
        <label>GOLGA6L9</label>
    </interactant>
    <organismsDiffer>false</organismsDiffer>
    <experiments>3</experiments>
</comment>
<comment type="interaction">
    <interactant intactId="EBI-747035">
        <id>Q9H788</id>
    </interactant>
    <interactant intactId="EBI-473189">
        <id>Q96D09</id>
        <label>GPRASP2</label>
    </interactant>
    <organismsDiffer>false</organismsDiffer>
    <experiments>3</experiments>
</comment>
<comment type="interaction">
    <interactant intactId="EBI-747035">
        <id>Q9H788</id>
    </interactant>
    <interactant intactId="EBI-10962409">
        <id>Q6IC98</id>
        <label>GRAMD4</label>
    </interactant>
    <organismsDiffer>false</organismsDiffer>
    <experiments>3</experiments>
</comment>
<comment type="interaction">
    <interactant intactId="EBI-747035">
        <id>Q9H788</id>
    </interactant>
    <interactant intactId="EBI-740418">
        <id>O75791</id>
        <label>GRAP2</label>
    </interactant>
    <organismsDiffer>false</organismsDiffer>
    <experiments>5</experiments>
</comment>
<comment type="interaction">
    <interactant intactId="EBI-747035">
        <id>Q9H788</id>
    </interactant>
    <interactant intactId="EBI-401755">
        <id>P62993</id>
        <label>GRB2</label>
    </interactant>
    <organismsDiffer>false</organismsDiffer>
    <experiments>4</experiments>
</comment>
<comment type="interaction">
    <interactant intactId="EBI-747035">
        <id>Q9H788</id>
    </interactant>
    <interactant intactId="EBI-750369">
        <id>P14317</id>
        <label>HCLS1</label>
    </interactant>
    <organismsDiffer>false</organismsDiffer>
    <experiments>8</experiments>
</comment>
<comment type="interaction">
    <interactant intactId="EBI-747035">
        <id>Q9H788</id>
    </interactant>
    <interactant intactId="EBI-2549423">
        <id>Q6NT76</id>
        <label>HMBOX1</label>
    </interactant>
    <organismsDiffer>false</organismsDiffer>
    <experiments>6</experiments>
</comment>
<comment type="interaction">
    <interactant intactId="EBI-747035">
        <id>Q9H788</id>
    </interactant>
    <interactant intactId="EBI-10961706">
        <id>Q96ED9-2</id>
        <label>HOOK2</label>
    </interactant>
    <organismsDiffer>false</organismsDiffer>
    <experiments>3</experiments>
</comment>
<comment type="interaction">
    <interactant intactId="EBI-747035">
        <id>Q9H788</id>
    </interactant>
    <interactant intactId="EBI-7116203">
        <id>O75031</id>
        <label>HSF2BP</label>
    </interactant>
    <organismsDiffer>false</organismsDiffer>
    <experiments>3</experiments>
</comment>
<comment type="interaction">
    <interactant intactId="EBI-747035">
        <id>Q9H788</id>
    </interactant>
    <interactant intactId="EBI-745305">
        <id>Q13422</id>
        <label>IKZF1</label>
    </interactant>
    <organismsDiffer>false</organismsDiffer>
    <experiments>3</experiments>
</comment>
<comment type="interaction">
    <interactant intactId="EBI-747035">
        <id>Q9H788</id>
    </interactant>
    <interactant intactId="EBI-10171697">
        <id>Q6A162</id>
        <label>KRT40</label>
    </interactant>
    <organismsDiffer>false</organismsDiffer>
    <experiments>6</experiments>
</comment>
<comment type="interaction">
    <interactant intactId="EBI-747035">
        <id>Q9H788</id>
    </interactant>
    <interactant intactId="EBI-740738">
        <id>O95751</id>
        <label>LDOC1</label>
    </interactant>
    <organismsDiffer>false</organismsDiffer>
    <experiments>8</experiments>
</comment>
<comment type="interaction">
    <interactant intactId="EBI-747035">
        <id>Q9H788</id>
    </interactant>
    <interactant intactId="EBI-741037">
        <id>Q9BRK4</id>
        <label>LZTS2</label>
    </interactant>
    <organismsDiffer>false</organismsDiffer>
    <experiments>3</experiments>
</comment>
<comment type="interaction">
    <interactant intactId="EBI-747035">
        <id>Q9H788</id>
    </interactant>
    <interactant intactId="EBI-739552">
        <id>P43364</id>
        <label>MAGEA11</label>
    </interactant>
    <organismsDiffer>false</organismsDiffer>
    <experiments>2</experiments>
</comment>
<comment type="interaction">
    <interactant intactId="EBI-747035">
        <id>Q9H788</id>
    </interactant>
    <interactant intactId="EBI-1045155">
        <id>P43360</id>
        <label>MAGEA6</label>
    </interactant>
    <organismsDiffer>false</organismsDiffer>
    <experiments>6</experiments>
</comment>
<comment type="interaction">
    <interactant intactId="EBI-747035">
        <id>Q9H788</id>
    </interactant>
    <interactant intactId="EBI-12516603">
        <id>Q8WWY6</id>
        <label>MBD3L1</label>
    </interactant>
    <organismsDiffer>false</organismsDiffer>
    <experiments>3</experiments>
</comment>
<comment type="interaction">
    <interactant intactId="EBI-747035">
        <id>Q9H788</id>
    </interactant>
    <interactant intactId="EBI-16439278">
        <id>Q6FHY5</id>
        <label>MEOX2</label>
    </interactant>
    <organismsDiffer>false</organismsDiffer>
    <experiments>3</experiments>
</comment>
<comment type="interaction">
    <interactant intactId="EBI-747035">
        <id>Q9H788</id>
    </interactant>
    <interactant intactId="EBI-9675802">
        <id>Q6PF18</id>
        <label>MORN3</label>
    </interactant>
    <organismsDiffer>false</organismsDiffer>
    <experiments>3</experiments>
</comment>
<comment type="interaction">
    <interactant intactId="EBI-747035">
        <id>Q9H788</id>
    </interactant>
    <interactant intactId="EBI-995714">
        <id>Q9Y605</id>
        <label>MRFAP1</label>
    </interactant>
    <organismsDiffer>false</organismsDiffer>
    <experiments>5</experiments>
</comment>
<comment type="interaction">
    <interactant intactId="EBI-747035">
        <id>Q9H788</id>
    </interactant>
    <interactant intactId="EBI-742948">
        <id>Q5JR59</id>
        <label>MTUS2</label>
    </interactant>
    <organismsDiffer>false</organismsDiffer>
    <experiments>3</experiments>
</comment>
<comment type="interaction">
    <interactant intactId="EBI-747035">
        <id>Q9H788</id>
    </interactant>
    <interactant intactId="EBI-11522433">
        <id>Q5JR59-3</id>
        <label>MTUS2</label>
    </interactant>
    <organismsDiffer>false</organismsDiffer>
    <experiments>5</experiments>
</comment>
<comment type="interaction">
    <interactant intactId="EBI-747035">
        <id>Q9H788</id>
    </interactant>
    <interactant intactId="EBI-10172876">
        <id>Q7Z6G3-2</id>
        <label>NECAB2</label>
    </interactant>
    <organismsDiffer>false</organismsDiffer>
    <experiments>6</experiments>
</comment>
<comment type="interaction">
    <interactant intactId="EBI-747035">
        <id>Q9H788</id>
    </interactant>
    <interactant intactId="EBI-719716">
        <id>Q9Y2I6</id>
        <label>NINL</label>
    </interactant>
    <organismsDiffer>false</organismsDiffer>
    <experiments>3</experiments>
</comment>
<comment type="interaction">
    <interactant intactId="EBI-747035">
        <id>Q9H788</id>
    </interactant>
    <interactant intactId="EBI-10178410">
        <id>Q86Y26</id>
        <label>NUTM1</label>
    </interactant>
    <organismsDiffer>false</organismsDiffer>
    <experiments>3</experiments>
</comment>
<comment type="interaction">
    <interactant intactId="EBI-747035">
        <id>Q9H788</id>
    </interactant>
    <interactant intactId="EBI-1105124">
        <id>Q5VU43</id>
        <label>PDE4DIP</label>
    </interactant>
    <organismsDiffer>false</organismsDiffer>
    <experiments>3</experiments>
</comment>
<comment type="interaction">
    <interactant intactId="EBI-747035">
        <id>Q9H788</id>
    </interactant>
    <interactant intactId="EBI-79165">
        <id>Q9NRD5</id>
        <label>PICK1</label>
    </interactant>
    <organismsDiffer>false</organismsDiffer>
    <experiments>3</experiments>
</comment>
<comment type="interaction">
    <interactant intactId="EBI-747035">
        <id>Q9H788</id>
    </interactant>
    <interactant intactId="EBI-949255">
        <id>Q58EX7</id>
        <label>PLEKHG4</label>
    </interactant>
    <organismsDiffer>false</organismsDiffer>
    <experiments>3</experiments>
</comment>
<comment type="interaction">
    <interactant intactId="EBI-747035">
        <id>Q9H788</id>
    </interactant>
    <interactant intactId="EBI-302345">
        <id>Q8ND90</id>
        <label>PNMA1</label>
    </interactant>
    <organismsDiffer>false</organismsDiffer>
    <experiments>6</experiments>
</comment>
<comment type="interaction">
    <interactant intactId="EBI-747035">
        <id>Q9H788</id>
    </interactant>
    <interactant intactId="EBI-357253">
        <id>P62136</id>
        <label>PPP1CA</label>
    </interactant>
    <organismsDiffer>false</organismsDiffer>
    <experiments>4</experiments>
</comment>
<comment type="interaction">
    <interactant intactId="EBI-747035">
        <id>Q9H788</id>
    </interactant>
    <interactant intactId="EBI-352350">
        <id>P62140</id>
        <label>PPP1CB</label>
    </interactant>
    <organismsDiffer>false</organismsDiffer>
    <experiments>20</experiments>
</comment>
<comment type="interaction">
    <interactant intactId="EBI-747035">
        <id>Q9H788</id>
    </interactant>
    <interactant intactId="EBI-2805516">
        <id>P31321</id>
        <label>PRKAR1B</label>
    </interactant>
    <organismsDiffer>false</organismsDiffer>
    <experiments>3</experiments>
</comment>
<comment type="interaction">
    <interactant intactId="EBI-747035">
        <id>Q9H788</id>
    </interactant>
    <interactant intactId="EBI-1050964">
        <id>O43586</id>
        <label>PSTPIP1</label>
    </interactant>
    <organismsDiffer>false</organismsDiffer>
    <experiments>3</experiments>
</comment>
<comment type="interaction">
    <interactant intactId="EBI-747035">
        <id>Q9H788</id>
    </interactant>
    <interactant intactId="EBI-726876">
        <id>Q6NUQ1</id>
        <label>RINT1</label>
    </interactant>
    <organismsDiffer>false</organismsDiffer>
    <experiments>6</experiments>
</comment>
<comment type="interaction">
    <interactant intactId="EBI-747035">
        <id>Q9H788</id>
    </interactant>
    <interactant intactId="EBI-10173690">
        <id>Q6FGM0</id>
        <label>SH3GL1</label>
    </interactant>
    <organismsDiffer>false</organismsDiffer>
    <experiments>3</experiments>
</comment>
<comment type="interaction">
    <interactant intactId="EBI-747035">
        <id>Q9H788</id>
    </interactant>
    <interactant intactId="EBI-697911">
        <id>Q99961</id>
        <label>SH3GL1</label>
    </interactant>
    <organismsDiffer>false</organismsDiffer>
    <experiments>6</experiments>
</comment>
<comment type="interaction">
    <interactant intactId="EBI-747035">
        <id>Q9H788</id>
    </interactant>
    <interactant intactId="EBI-2477305">
        <id>Q86WV1</id>
        <label>SKAP1</label>
    </interactant>
    <organismsDiffer>false</organismsDiffer>
    <experiments>3</experiments>
</comment>
<comment type="interaction">
    <interactant intactId="EBI-747035">
        <id>Q9H788</id>
    </interactant>
    <interactant intactId="EBI-741237">
        <id>O60504</id>
        <label>SORBS3</label>
    </interactant>
    <organismsDiffer>false</organismsDiffer>
    <experiments>6</experiments>
</comment>
<comment type="interaction">
    <interactant intactId="EBI-747035">
        <id>Q9H788</id>
    </interactant>
    <interactant intactId="EBI-413317">
        <id>Q96R06</id>
        <label>SPAG5</label>
    </interactant>
    <organismsDiffer>false</organismsDiffer>
    <experiments>3</experiments>
</comment>
<comment type="interaction">
    <interactant intactId="EBI-747035">
        <id>Q9H788</id>
    </interactant>
    <interactant intactId="EBI-373258">
        <id>O75886</id>
        <label>STAM2</label>
    </interactant>
    <organismsDiffer>false</organismsDiffer>
    <experiments>3</experiments>
</comment>
<comment type="interaction">
    <interactant intactId="EBI-747035">
        <id>Q9H788</id>
    </interactant>
    <interactant intactId="EBI-714135">
        <id>O75558</id>
        <label>STX11</label>
    </interactant>
    <organismsDiffer>false</organismsDiffer>
    <experiments>3</experiments>
</comment>
<comment type="interaction">
    <interactant intactId="EBI-747035">
        <id>Q9H788</id>
    </interactant>
    <interactant intactId="EBI-624237">
        <id>O75410</id>
        <label>TACC1</label>
    </interactant>
    <organismsDiffer>false</organismsDiffer>
    <experiments>4</experiments>
</comment>
<comment type="interaction">
    <interactant intactId="EBI-747035">
        <id>Q9H788</id>
    </interactant>
    <interactant intactId="EBI-12007872">
        <id>O75410-7</id>
        <label>TACC1</label>
    </interactant>
    <organismsDiffer>false</organismsDiffer>
    <experiments>3</experiments>
</comment>
<comment type="interaction">
    <interactant intactId="EBI-747035">
        <id>Q9H788</id>
    </interactant>
    <interactant intactId="EBI-1105213">
        <id>Q9UBB9</id>
        <label>TFIP11</label>
    </interactant>
    <organismsDiffer>false</organismsDiffer>
    <experiments>8</experiments>
</comment>
<comment type="interaction">
    <interactant intactId="EBI-747035">
        <id>Q9H788</id>
    </interactant>
    <interactant intactId="EBI-355744">
        <id>Q12933</id>
        <label>TRAF2</label>
    </interactant>
    <organismsDiffer>false</organismsDiffer>
    <experiments>3</experiments>
</comment>
<comment type="interaction">
    <interactant intactId="EBI-747035">
        <id>Q9H788</id>
    </interactant>
    <interactant intactId="EBI-740098">
        <id>P36406</id>
        <label>TRIM23</label>
    </interactant>
    <organismsDiffer>false</organismsDiffer>
    <experiments>3</experiments>
</comment>
<comment type="interaction">
    <interactant intactId="EBI-747035">
        <id>Q9H788</id>
    </interactant>
    <interactant intactId="EBI-719493">
        <id>P14373</id>
        <label>TRIM27</label>
    </interactant>
    <organismsDiffer>false</organismsDiffer>
    <experiments>3</experiments>
</comment>
<comment type="interaction">
    <interactant intactId="EBI-747035">
        <id>Q9H788</id>
    </interactant>
    <interactant intactId="EBI-11059915">
        <id>Q8N7C3</id>
        <label>TRIML2</label>
    </interactant>
    <organismsDiffer>false</organismsDiffer>
    <experiments>3</experiments>
</comment>
<comment type="interaction">
    <interactant intactId="EBI-747035">
        <id>Q9H788</id>
    </interactant>
    <interactant intactId="EBI-948354">
        <id>Q6DKK2</id>
        <label>TTC19</label>
    </interactant>
    <organismsDiffer>false</organismsDiffer>
    <experiments>3</experiments>
</comment>
<comment type="interaction">
    <interactant intactId="EBI-747035">
        <id>Q9H788</id>
    </interactant>
    <interactant intactId="EBI-746004">
        <id>Q5T124</id>
        <label>UBXN11</label>
    </interactant>
    <organismsDiffer>false</organismsDiffer>
    <experiments>3</experiments>
</comment>
<comment type="interaction">
    <interactant intactId="EBI-747035">
        <id>Q9H788</id>
    </interactant>
    <interactant intactId="EBI-2799833">
        <id>Q8N1B4</id>
        <label>VPS52</label>
    </interactant>
    <organismsDiffer>false</organismsDiffer>
    <experiments>3</experiments>
</comment>
<comment type="interaction">
    <interactant intactId="EBI-747035">
        <id>Q9H788</id>
    </interactant>
    <interactant intactId="EBI-12040603">
        <id>Q9NZC7-5</id>
        <label>WWOX</label>
    </interactant>
    <organismsDiffer>false</organismsDiffer>
    <experiments>5</experiments>
</comment>
<comment type="interaction">
    <interactant intactId="EBI-747035">
        <id>Q9H788</id>
    </interactant>
    <interactant intactId="EBI-6658719">
        <id>Q96QA6</id>
        <label>YPEL2</label>
    </interactant>
    <organismsDiffer>false</organismsDiffer>
    <experiments>3</experiments>
</comment>
<comment type="interaction">
    <interactant intactId="EBI-747035">
        <id>Q9H788</id>
    </interactant>
    <interactant intactId="EBI-12030590">
        <id>Q9H0C1</id>
        <label>ZMYND12</label>
    </interactant>
    <organismsDiffer>false</organismsDiffer>
    <experiments>3</experiments>
</comment>
<comment type="interaction">
    <interactant intactId="EBI-747035">
        <id>Q9H788</id>
    </interactant>
    <interactant intactId="EBI-625509">
        <id>Q8N720</id>
        <label>ZNF655</label>
    </interactant>
    <organismsDiffer>false</organismsDiffer>
    <experiments>3</experiments>
</comment>
<comment type="interaction">
    <interactant intactId="EBI-747035">
        <id>Q9H788</id>
    </interactant>
    <interactant intactId="EBI-10251462">
        <id>Q6NX45</id>
        <label>ZNF774</label>
    </interactant>
    <organismsDiffer>false</organismsDiffer>
    <experiments>3</experiments>
</comment>
<comment type="interaction">
    <interactant intactId="EBI-10308083">
        <id>Q9H788-2</id>
    </interactant>
    <interactant intactId="EBI-1181367">
        <id>Q01850</id>
        <label>CDR2</label>
    </interactant>
    <organismsDiffer>false</organismsDiffer>
    <experiments>3</experiments>
</comment>
<comment type="interaction">
    <interactant intactId="EBI-10308083">
        <id>Q9H788-2</id>
    </interactant>
    <interactant intactId="EBI-739624">
        <id>Q8NHQ1</id>
        <label>CEP70</label>
    </interactant>
    <organismsDiffer>false</organismsDiffer>
    <experiments>3</experiments>
</comment>
<comment type="interaction">
    <interactant intactId="EBI-10308083">
        <id>Q9H788-2</id>
    </interactant>
    <interactant intactId="EBI-751783">
        <id>Q9UJU6</id>
        <label>DBNL</label>
    </interactant>
    <organismsDiffer>false</organismsDiffer>
    <experiments>3</experiments>
</comment>
<comment type="interaction">
    <interactant intactId="EBI-10308083">
        <id>Q9H788-2</id>
    </interactant>
    <interactant intactId="EBI-5661036">
        <id>A1L4K1</id>
        <label>FSD2</label>
    </interactant>
    <organismsDiffer>false</organismsDiffer>
    <experiments>3</experiments>
</comment>
<comment type="interaction">
    <interactant intactId="EBI-10308083">
        <id>Q9H788-2</id>
    </interactant>
    <interactant intactId="EBI-618309">
        <id>Q08379</id>
        <label>GOLGA2</label>
    </interactant>
    <organismsDiffer>false</organismsDiffer>
    <experiments>3</experiments>
</comment>
<comment type="interaction">
    <interactant intactId="EBI-10308083">
        <id>Q9H788-2</id>
    </interactant>
    <interactant intactId="EBI-742948">
        <id>Q5JR59</id>
        <label>MTUS2</label>
    </interactant>
    <organismsDiffer>false</organismsDiffer>
    <experiments>3</experiments>
</comment>
<comment type="interaction">
    <interactant intactId="EBI-10308083">
        <id>Q9H788-2</id>
    </interactant>
    <interactant intactId="EBI-10172876">
        <id>Q7Z6G3-2</id>
        <label>NECAB2</label>
    </interactant>
    <organismsDiffer>false</organismsDiffer>
    <experiments>3</experiments>
</comment>
<comment type="interaction">
    <interactant intactId="EBI-10308083">
        <id>Q9H788-2</id>
    </interactant>
    <interactant intactId="EBI-1105124">
        <id>Q5VU43</id>
        <label>PDE4DIP</label>
    </interactant>
    <organismsDiffer>false</organismsDiffer>
    <experiments>3</experiments>
</comment>
<comment type="interaction">
    <interactant intactId="EBI-10308083">
        <id>Q9H788-2</id>
    </interactant>
    <interactant intactId="EBI-726876">
        <id>Q6NUQ1</id>
        <label>RINT1</label>
    </interactant>
    <organismsDiffer>false</organismsDiffer>
    <experiments>3</experiments>
</comment>
<comment type="interaction">
    <interactant intactId="EBI-10308083">
        <id>Q9H788-2</id>
    </interactant>
    <interactant intactId="EBI-10173690">
        <id>Q6FGM0</id>
        <label>SH3GL1</label>
    </interactant>
    <organismsDiffer>false</organismsDiffer>
    <experiments>3</experiments>
</comment>
<comment type="interaction">
    <interactant intactId="EBI-10308083">
        <id>Q9H788-2</id>
    </interactant>
    <interactant intactId="EBI-2477305">
        <id>Q86WV1</id>
        <label>SKAP1</label>
    </interactant>
    <organismsDiffer>false</organismsDiffer>
    <experiments>3</experiments>
</comment>
<comment type="interaction">
    <interactant intactId="EBI-10308083">
        <id>Q9H788-2</id>
    </interactant>
    <interactant intactId="EBI-311323">
        <id>O94875</id>
        <label>SORBS2</label>
    </interactant>
    <organismsDiffer>false</organismsDiffer>
    <experiments>3</experiments>
</comment>
<comment type="interaction">
    <interactant intactId="EBI-10308083">
        <id>Q9H788-2</id>
    </interactant>
    <interactant intactId="EBI-741237">
        <id>O60504</id>
        <label>SORBS3</label>
    </interactant>
    <organismsDiffer>false</organismsDiffer>
    <experiments>3</experiments>
</comment>
<comment type="interaction">
    <interactant intactId="EBI-10308083">
        <id>Q9H788-2</id>
    </interactant>
    <interactant intactId="EBI-373258">
        <id>O75886</id>
        <label>STAM2</label>
    </interactant>
    <organismsDiffer>false</organismsDiffer>
    <experiments>3</experiments>
</comment>
<comment type="interaction">
    <interactant intactId="EBI-10308083">
        <id>Q9H788-2</id>
    </interactant>
    <interactant intactId="EBI-1105213">
        <id>Q9UBB9</id>
        <label>TFIP11</label>
    </interactant>
    <organismsDiffer>false</organismsDiffer>
    <experiments>3</experiments>
</comment>
<comment type="interaction">
    <interactant intactId="EBI-10308083">
        <id>Q9H788-2</id>
    </interactant>
    <interactant intactId="EBI-740098">
        <id>P36406</id>
        <label>TRIM23</label>
    </interactant>
    <organismsDiffer>false</organismsDiffer>
    <experiments>3</experiments>
</comment>
<comment type="interaction">
    <interactant intactId="EBI-10308083">
        <id>Q9H788-2</id>
    </interactant>
    <interactant intactId="EBI-719493">
        <id>P14373</id>
        <label>TRIM27</label>
    </interactant>
    <organismsDiffer>false</organismsDiffer>
    <experiments>3</experiments>
</comment>
<comment type="interaction">
    <interactant intactId="EBI-10308083">
        <id>Q9H788-2</id>
    </interactant>
    <interactant intactId="EBI-739895">
        <id>Q8N6Y0</id>
        <label>USHBP1</label>
    </interactant>
    <organismsDiffer>false</organismsDiffer>
    <experiments>3</experiments>
</comment>
<comment type="interaction">
    <interactant intactId="EBI-10308083">
        <id>Q9H788-2</id>
    </interactant>
    <interactant intactId="EBI-711925">
        <id>Q05516</id>
        <label>ZBTB16</label>
    </interactant>
    <organismsDiffer>false</organismsDiffer>
    <experiments>3</experiments>
</comment>
<comment type="subcellular location">
    <subcellularLocation>
        <location evidence="8">Cytoplasm</location>
    </subcellularLocation>
    <text evidence="1">Located at podocyte foot processes.</text>
</comment>
<comment type="alternative products">
    <event type="alternative splicing"/>
    <isoform>
        <id>Q9H788-1</id>
        <name>1</name>
        <sequence type="displayed"/>
    </isoform>
    <isoform>
        <id>Q9H788-2</id>
        <name>2</name>
        <sequence type="described" ref="VSP_042784"/>
    </isoform>
</comment>
<comment type="tissue specificity">
    <text evidence="5">Ubiquitously expressed. Aberrantly expressed in some cancers.</text>
</comment>
<comment type="sequence caution" evidence="11">
    <conflict type="frameshift">
        <sequence resource="EMBL-CDS" id="AAH67117"/>
    </conflict>
</comment>
<comment type="sequence caution" evidence="11">
    <conflict type="erroneous initiation">
        <sequence resource="EMBL-CDS" id="AAO41715"/>
    </conflict>
    <text>Truncated N-terminus.</text>
</comment>
<comment type="sequence caution" evidence="11">
    <conflict type="erroneous termination">
        <sequence resource="EMBL-CDS" id="AAO41715"/>
    </conflict>
    <text>Extended C-terminus.</text>
</comment>
<comment type="sequence caution" evidence="11">
    <conflict type="erroneous initiation">
        <sequence resource="EMBL-CDS" id="BAB14935"/>
    </conflict>
</comment>
<name>SH24A_HUMAN</name>
<protein>
    <recommendedName>
        <fullName>SH2 domain-containing protein 4A</fullName>
    </recommendedName>
    <alternativeName>
        <fullName>Protein SH(2)A</fullName>
    </alternativeName>
    <alternativeName>
        <fullName>Protein phosphatase 1 regulatory subunit 38</fullName>
    </alternativeName>
</protein>
<dbReference type="EMBL" id="AK024620">
    <property type="protein sequence ID" value="BAB14935.1"/>
    <property type="status" value="ALT_INIT"/>
    <property type="molecule type" value="mRNA"/>
</dbReference>
<dbReference type="EMBL" id="AK024799">
    <property type="protein sequence ID" value="BAB15010.1"/>
    <property type="molecule type" value="mRNA"/>
</dbReference>
<dbReference type="EMBL" id="AK293301">
    <property type="protein sequence ID" value="BAG56822.1"/>
    <property type="molecule type" value="mRNA"/>
</dbReference>
<dbReference type="EMBL" id="AC068880">
    <property type="status" value="NOT_ANNOTATED_CDS"/>
    <property type="molecule type" value="Genomic_DNA"/>
</dbReference>
<dbReference type="EMBL" id="BC014525">
    <property type="protein sequence ID" value="AAH14525.2"/>
    <property type="molecule type" value="mRNA"/>
</dbReference>
<dbReference type="EMBL" id="BC067117">
    <property type="protein sequence ID" value="AAH67117.1"/>
    <property type="status" value="ALT_FRAME"/>
    <property type="molecule type" value="mRNA"/>
</dbReference>
<dbReference type="EMBL" id="BC082982">
    <property type="protein sequence ID" value="AAH82982.1"/>
    <property type="molecule type" value="mRNA"/>
</dbReference>
<dbReference type="EMBL" id="AY190323">
    <property type="protein sequence ID" value="AAO41715.1"/>
    <property type="status" value="ALT_SEQ"/>
    <property type="molecule type" value="mRNA"/>
</dbReference>
<dbReference type="CCDS" id="CCDS55206.1">
    <molecule id="Q9H788-2"/>
</dbReference>
<dbReference type="CCDS" id="CCDS6009.1">
    <molecule id="Q9H788-1"/>
</dbReference>
<dbReference type="RefSeq" id="NP_001167630.1">
    <molecule id="Q9H788-1"/>
    <property type="nucleotide sequence ID" value="NM_001174159.2"/>
</dbReference>
<dbReference type="RefSeq" id="NP_001167631.1">
    <molecule id="Q9H788-2"/>
    <property type="nucleotide sequence ID" value="NM_001174160.2"/>
</dbReference>
<dbReference type="RefSeq" id="NP_071354.2">
    <molecule id="Q9H788-1"/>
    <property type="nucleotide sequence ID" value="NM_022071.3"/>
</dbReference>
<dbReference type="BioGRID" id="121977">
    <property type="interactions" value="132"/>
</dbReference>
<dbReference type="ELM" id="Q9H788"/>
<dbReference type="FunCoup" id="Q9H788">
    <property type="interactions" value="986"/>
</dbReference>
<dbReference type="IntAct" id="Q9H788">
    <property type="interactions" value="106"/>
</dbReference>
<dbReference type="MINT" id="Q9H788"/>
<dbReference type="STRING" id="9606.ENSP00000265807"/>
<dbReference type="GlyGen" id="Q9H788">
    <property type="glycosylation" value="1 site, 1 O-linked glycan (1 site)"/>
</dbReference>
<dbReference type="iPTMnet" id="Q9H788"/>
<dbReference type="MetOSite" id="Q9H788"/>
<dbReference type="PhosphoSitePlus" id="Q9H788"/>
<dbReference type="BioMuta" id="SH2D4A"/>
<dbReference type="DMDM" id="74725117"/>
<dbReference type="CPTAC" id="CPTAC-1003"/>
<dbReference type="jPOST" id="Q9H788"/>
<dbReference type="MassIVE" id="Q9H788"/>
<dbReference type="PaxDb" id="9606-ENSP00000265807"/>
<dbReference type="PeptideAtlas" id="Q9H788"/>
<dbReference type="ProteomicsDB" id="81087">
    <molecule id="Q9H788-1"/>
</dbReference>
<dbReference type="ProteomicsDB" id="81088">
    <molecule id="Q9H788-2"/>
</dbReference>
<dbReference type="Pumba" id="Q9H788"/>
<dbReference type="Antibodypedia" id="968">
    <property type="antibodies" value="220 antibodies from 32 providers"/>
</dbReference>
<dbReference type="DNASU" id="63898"/>
<dbReference type="Ensembl" id="ENST00000265807.8">
    <molecule id="Q9H788-1"/>
    <property type="protein sequence ID" value="ENSP00000265807.3"/>
    <property type="gene ID" value="ENSG00000104611.12"/>
</dbReference>
<dbReference type="Ensembl" id="ENST00000518040.5">
    <molecule id="Q9H788-2"/>
    <property type="protein sequence ID" value="ENSP00000429482.1"/>
    <property type="gene ID" value="ENSG00000104611.12"/>
</dbReference>
<dbReference type="Ensembl" id="ENST00000519207.5">
    <molecule id="Q9H788-1"/>
    <property type="protein sequence ID" value="ENSP00000428684.1"/>
    <property type="gene ID" value="ENSG00000104611.12"/>
</dbReference>
<dbReference type="GeneID" id="63898"/>
<dbReference type="KEGG" id="hsa:63898"/>
<dbReference type="MANE-Select" id="ENST00000265807.8">
    <property type="protein sequence ID" value="ENSP00000265807.3"/>
    <property type="RefSeq nucleotide sequence ID" value="NM_022071.4"/>
    <property type="RefSeq protein sequence ID" value="NP_071354.2"/>
</dbReference>
<dbReference type="UCSC" id="uc003wzb.4">
    <molecule id="Q9H788-1"/>
    <property type="organism name" value="human"/>
</dbReference>
<dbReference type="AGR" id="HGNC:26102"/>
<dbReference type="CTD" id="63898"/>
<dbReference type="DisGeNET" id="63898"/>
<dbReference type="GeneCards" id="SH2D4A"/>
<dbReference type="HGNC" id="HGNC:26102">
    <property type="gene designation" value="SH2D4A"/>
</dbReference>
<dbReference type="HPA" id="ENSG00000104611">
    <property type="expression patterns" value="Low tissue specificity"/>
</dbReference>
<dbReference type="MIM" id="614968">
    <property type="type" value="gene"/>
</dbReference>
<dbReference type="neXtProt" id="NX_Q9H788"/>
<dbReference type="OpenTargets" id="ENSG00000104611"/>
<dbReference type="PharmGKB" id="PA134891945"/>
<dbReference type="VEuPathDB" id="HostDB:ENSG00000104611"/>
<dbReference type="eggNOG" id="ENOG502QVV5">
    <property type="taxonomic scope" value="Eukaryota"/>
</dbReference>
<dbReference type="GeneTree" id="ENSGT00940000157357"/>
<dbReference type="HOGENOM" id="CLU_029296_1_0_1"/>
<dbReference type="InParanoid" id="Q9H788"/>
<dbReference type="OMA" id="NRMKTYG"/>
<dbReference type="OrthoDB" id="10003345at2759"/>
<dbReference type="PAN-GO" id="Q9H788">
    <property type="GO annotations" value="2 GO annotations based on evolutionary models"/>
</dbReference>
<dbReference type="PhylomeDB" id="Q9H788"/>
<dbReference type="TreeFam" id="TF336893"/>
<dbReference type="PathwayCommons" id="Q9H788"/>
<dbReference type="SignaLink" id="Q9H788"/>
<dbReference type="BioGRID-ORCS" id="63898">
    <property type="hits" value="16 hits in 1146 CRISPR screens"/>
</dbReference>
<dbReference type="GeneWiki" id="SH2D4A"/>
<dbReference type="GenomeRNAi" id="63898"/>
<dbReference type="Pharos" id="Q9H788">
    <property type="development level" value="Tbio"/>
</dbReference>
<dbReference type="PRO" id="PR:Q9H788"/>
<dbReference type="Proteomes" id="UP000005640">
    <property type="component" value="Chromosome 8"/>
</dbReference>
<dbReference type="RNAct" id="Q9H788">
    <property type="molecule type" value="protein"/>
</dbReference>
<dbReference type="Bgee" id="ENSG00000104611">
    <property type="expression patterns" value="Expressed in secondary oocyte and 175 other cell types or tissues"/>
</dbReference>
<dbReference type="ExpressionAtlas" id="Q9H788">
    <property type="expression patterns" value="baseline and differential"/>
</dbReference>
<dbReference type="GO" id="GO:0005737">
    <property type="term" value="C:cytoplasm"/>
    <property type="evidence" value="ECO:0000318"/>
    <property type="project" value="GO_Central"/>
</dbReference>
<dbReference type="GO" id="GO:0005829">
    <property type="term" value="C:cytosol"/>
    <property type="evidence" value="ECO:0000314"/>
    <property type="project" value="HPA"/>
</dbReference>
<dbReference type="GO" id="GO:0019902">
    <property type="term" value="F:phosphatase binding"/>
    <property type="evidence" value="ECO:0000314"/>
    <property type="project" value="UniProtKB"/>
</dbReference>
<dbReference type="FunFam" id="3.30.505.10:FF:000034">
    <property type="entry name" value="SH2 domain-containing protein 4A"/>
    <property type="match status" value="1"/>
</dbReference>
<dbReference type="Gene3D" id="3.30.505.10">
    <property type="entry name" value="SH2 domain"/>
    <property type="match status" value="1"/>
</dbReference>
<dbReference type="InterPro" id="IPR000980">
    <property type="entry name" value="SH2"/>
</dbReference>
<dbReference type="InterPro" id="IPR036860">
    <property type="entry name" value="SH2_dom_sf"/>
</dbReference>
<dbReference type="PANTHER" id="PTHR14388:SF5">
    <property type="entry name" value="SH2 DOMAIN-CONTAINING PROTEIN 4A"/>
    <property type="match status" value="1"/>
</dbReference>
<dbReference type="PANTHER" id="PTHR14388">
    <property type="entry name" value="T CELL-SPECIFIC ADAPTER PROTEIN TSAD"/>
    <property type="match status" value="1"/>
</dbReference>
<dbReference type="Pfam" id="PF00017">
    <property type="entry name" value="SH2"/>
    <property type="match status" value="1"/>
</dbReference>
<dbReference type="SMART" id="SM00252">
    <property type="entry name" value="SH2"/>
    <property type="match status" value="1"/>
</dbReference>
<dbReference type="SUPFAM" id="SSF55550">
    <property type="entry name" value="SH2 domain"/>
    <property type="match status" value="1"/>
</dbReference>
<dbReference type="PROSITE" id="PS50001">
    <property type="entry name" value="SH2"/>
    <property type="match status" value="1"/>
</dbReference>
<evidence type="ECO:0000250" key="1"/>
<evidence type="ECO:0000250" key="2">
    <source>
        <dbReference type="UniProtKB" id="Q9D7V1"/>
    </source>
</evidence>
<evidence type="ECO:0000255" key="3">
    <source>
        <dbReference type="PROSITE-ProRule" id="PRU00191"/>
    </source>
</evidence>
<evidence type="ECO:0000256" key="4">
    <source>
        <dbReference type="SAM" id="MobiDB-lite"/>
    </source>
</evidence>
<evidence type="ECO:0000269" key="5">
    <source>
    </source>
</evidence>
<evidence type="ECO:0000269" key="6">
    <source>
    </source>
</evidence>
<evidence type="ECO:0000269" key="7">
    <source>
    </source>
</evidence>
<evidence type="ECO:0000269" key="8">
    <source>
    </source>
</evidence>
<evidence type="ECO:0000269" key="9">
    <source>
    </source>
</evidence>
<evidence type="ECO:0000303" key="10">
    <source>
    </source>
</evidence>
<evidence type="ECO:0000305" key="11"/>
<evidence type="ECO:0007744" key="12">
    <source>
    </source>
</evidence>
<evidence type="ECO:0007744" key="13">
    <source>
    </source>
</evidence>
<evidence type="ECO:0007744" key="14">
    <source>
    </source>
</evidence>
<evidence type="ECO:0007744" key="15">
    <source>
    </source>
</evidence>
<evidence type="ECO:0007744" key="16">
    <source>
    </source>
</evidence>
<evidence type="ECO:0007744" key="17">
    <source>
    </source>
</evidence>
<reference key="1">
    <citation type="journal article" date="2004" name="Nat. Genet.">
        <title>Complete sequencing and characterization of 21,243 full-length human cDNAs.</title>
        <authorList>
            <person name="Ota T."/>
            <person name="Suzuki Y."/>
            <person name="Nishikawa T."/>
            <person name="Otsuki T."/>
            <person name="Sugiyama T."/>
            <person name="Irie R."/>
            <person name="Wakamatsu A."/>
            <person name="Hayashi K."/>
            <person name="Sato H."/>
            <person name="Nagai K."/>
            <person name="Kimura K."/>
            <person name="Makita H."/>
            <person name="Sekine M."/>
            <person name="Obayashi M."/>
            <person name="Nishi T."/>
            <person name="Shibahara T."/>
            <person name="Tanaka T."/>
            <person name="Ishii S."/>
            <person name="Yamamoto J."/>
            <person name="Saito K."/>
            <person name="Kawai Y."/>
            <person name="Isono Y."/>
            <person name="Nakamura Y."/>
            <person name="Nagahari K."/>
            <person name="Murakami K."/>
            <person name="Yasuda T."/>
            <person name="Iwayanagi T."/>
            <person name="Wagatsuma M."/>
            <person name="Shiratori A."/>
            <person name="Sudo H."/>
            <person name="Hosoiri T."/>
            <person name="Kaku Y."/>
            <person name="Kodaira H."/>
            <person name="Kondo H."/>
            <person name="Sugawara M."/>
            <person name="Takahashi M."/>
            <person name="Kanda K."/>
            <person name="Yokoi T."/>
            <person name="Furuya T."/>
            <person name="Kikkawa E."/>
            <person name="Omura Y."/>
            <person name="Abe K."/>
            <person name="Kamihara K."/>
            <person name="Katsuta N."/>
            <person name="Sato K."/>
            <person name="Tanikawa M."/>
            <person name="Yamazaki M."/>
            <person name="Ninomiya K."/>
            <person name="Ishibashi T."/>
            <person name="Yamashita H."/>
            <person name="Murakawa K."/>
            <person name="Fujimori K."/>
            <person name="Tanai H."/>
            <person name="Kimata M."/>
            <person name="Watanabe M."/>
            <person name="Hiraoka S."/>
            <person name="Chiba Y."/>
            <person name="Ishida S."/>
            <person name="Ono Y."/>
            <person name="Takiguchi S."/>
            <person name="Watanabe S."/>
            <person name="Yosida M."/>
            <person name="Hotuta T."/>
            <person name="Kusano J."/>
            <person name="Kanehori K."/>
            <person name="Takahashi-Fujii A."/>
            <person name="Hara H."/>
            <person name="Tanase T.-O."/>
            <person name="Nomura Y."/>
            <person name="Togiya S."/>
            <person name="Komai F."/>
            <person name="Hara R."/>
            <person name="Takeuchi K."/>
            <person name="Arita M."/>
            <person name="Imose N."/>
            <person name="Musashino K."/>
            <person name="Yuuki H."/>
            <person name="Oshima A."/>
            <person name="Sasaki N."/>
            <person name="Aotsuka S."/>
            <person name="Yoshikawa Y."/>
            <person name="Matsunawa H."/>
            <person name="Ichihara T."/>
            <person name="Shiohata N."/>
            <person name="Sano S."/>
            <person name="Moriya S."/>
            <person name="Momiyama H."/>
            <person name="Satoh N."/>
            <person name="Takami S."/>
            <person name="Terashima Y."/>
            <person name="Suzuki O."/>
            <person name="Nakagawa S."/>
            <person name="Senoh A."/>
            <person name="Mizoguchi H."/>
            <person name="Goto Y."/>
            <person name="Shimizu F."/>
            <person name="Wakebe H."/>
            <person name="Hishigaki H."/>
            <person name="Watanabe T."/>
            <person name="Sugiyama A."/>
            <person name="Takemoto M."/>
            <person name="Kawakami B."/>
            <person name="Yamazaki M."/>
            <person name="Watanabe K."/>
            <person name="Kumagai A."/>
            <person name="Itakura S."/>
            <person name="Fukuzumi Y."/>
            <person name="Fujimori Y."/>
            <person name="Komiyama M."/>
            <person name="Tashiro H."/>
            <person name="Tanigami A."/>
            <person name="Fujiwara T."/>
            <person name="Ono T."/>
            <person name="Yamada K."/>
            <person name="Fujii Y."/>
            <person name="Ozaki K."/>
            <person name="Hirao M."/>
            <person name="Ohmori Y."/>
            <person name="Kawabata A."/>
            <person name="Hikiji T."/>
            <person name="Kobatake N."/>
            <person name="Inagaki H."/>
            <person name="Ikema Y."/>
            <person name="Okamoto S."/>
            <person name="Okitani R."/>
            <person name="Kawakami T."/>
            <person name="Noguchi S."/>
            <person name="Itoh T."/>
            <person name="Shigeta K."/>
            <person name="Senba T."/>
            <person name="Matsumura K."/>
            <person name="Nakajima Y."/>
            <person name="Mizuno T."/>
            <person name="Morinaga M."/>
            <person name="Sasaki M."/>
            <person name="Togashi T."/>
            <person name="Oyama M."/>
            <person name="Hata H."/>
            <person name="Watanabe M."/>
            <person name="Komatsu T."/>
            <person name="Mizushima-Sugano J."/>
            <person name="Satoh T."/>
            <person name="Shirai Y."/>
            <person name="Takahashi Y."/>
            <person name="Nakagawa K."/>
            <person name="Okumura K."/>
            <person name="Nagase T."/>
            <person name="Nomura N."/>
            <person name="Kikuchi H."/>
            <person name="Masuho Y."/>
            <person name="Yamashita R."/>
            <person name="Nakai K."/>
            <person name="Yada T."/>
            <person name="Nakamura Y."/>
            <person name="Ohara O."/>
            <person name="Isogai T."/>
            <person name="Sugano S."/>
        </authorList>
    </citation>
    <scope>NUCLEOTIDE SEQUENCE [LARGE SCALE MRNA] (ISOFORMS 1 AND 2)</scope>
    <scope>VARIANTS GLY-209; GLY-216 AND ALA-263</scope>
    <source>
        <tissue>Adipose tissue</tissue>
    </source>
</reference>
<reference key="2">
    <citation type="journal article" date="2006" name="Nature">
        <title>DNA sequence and analysis of human chromosome 8.</title>
        <authorList>
            <person name="Nusbaum C."/>
            <person name="Mikkelsen T.S."/>
            <person name="Zody M.C."/>
            <person name="Asakawa S."/>
            <person name="Taudien S."/>
            <person name="Garber M."/>
            <person name="Kodira C.D."/>
            <person name="Schueler M.G."/>
            <person name="Shimizu A."/>
            <person name="Whittaker C.A."/>
            <person name="Chang J.L."/>
            <person name="Cuomo C.A."/>
            <person name="Dewar K."/>
            <person name="FitzGerald M.G."/>
            <person name="Yang X."/>
            <person name="Allen N.R."/>
            <person name="Anderson S."/>
            <person name="Asakawa T."/>
            <person name="Blechschmidt K."/>
            <person name="Bloom T."/>
            <person name="Borowsky M.L."/>
            <person name="Butler J."/>
            <person name="Cook A."/>
            <person name="Corum B."/>
            <person name="DeArellano K."/>
            <person name="DeCaprio D."/>
            <person name="Dooley K.T."/>
            <person name="Dorris L. III"/>
            <person name="Engels R."/>
            <person name="Gloeckner G."/>
            <person name="Hafez N."/>
            <person name="Hagopian D.S."/>
            <person name="Hall J.L."/>
            <person name="Ishikawa S.K."/>
            <person name="Jaffe D.B."/>
            <person name="Kamat A."/>
            <person name="Kudoh J."/>
            <person name="Lehmann R."/>
            <person name="Lokitsang T."/>
            <person name="Macdonald P."/>
            <person name="Major J.E."/>
            <person name="Matthews C.D."/>
            <person name="Mauceli E."/>
            <person name="Menzel U."/>
            <person name="Mihalev A.H."/>
            <person name="Minoshima S."/>
            <person name="Murayama Y."/>
            <person name="Naylor J.W."/>
            <person name="Nicol R."/>
            <person name="Nguyen C."/>
            <person name="O'Leary S.B."/>
            <person name="O'Neill K."/>
            <person name="Parker S.C.J."/>
            <person name="Polley A."/>
            <person name="Raymond C.K."/>
            <person name="Reichwald K."/>
            <person name="Rodriguez J."/>
            <person name="Sasaki T."/>
            <person name="Schilhabel M."/>
            <person name="Siddiqui R."/>
            <person name="Smith C.L."/>
            <person name="Sneddon T.P."/>
            <person name="Talamas J.A."/>
            <person name="Tenzin P."/>
            <person name="Topham K."/>
            <person name="Venkataraman V."/>
            <person name="Wen G."/>
            <person name="Yamazaki S."/>
            <person name="Young S.K."/>
            <person name="Zeng Q."/>
            <person name="Zimmer A.R."/>
            <person name="Rosenthal A."/>
            <person name="Birren B.W."/>
            <person name="Platzer M."/>
            <person name="Shimizu N."/>
            <person name="Lander E.S."/>
        </authorList>
    </citation>
    <scope>NUCLEOTIDE SEQUENCE [LARGE SCALE GENOMIC DNA]</scope>
</reference>
<reference key="3">
    <citation type="journal article" date="2004" name="Genome Res.">
        <title>The status, quality, and expansion of the NIH full-length cDNA project: the Mammalian Gene Collection (MGC).</title>
        <authorList>
            <consortium name="The MGC Project Team"/>
        </authorList>
    </citation>
    <scope>NUCLEOTIDE SEQUENCE [LARGE SCALE MRNA] (ISOFORM 1)</scope>
    <scope>VARIANT ASN-275</scope>
    <source>
        <tissue>Ovary</tissue>
        <tissue>Prostate</tissue>
        <tissue>Uterus</tissue>
    </source>
</reference>
<reference key="4">
    <citation type="journal article" date="2002" name="Zhonghua Yi Xue Yi Chuan Xue Za Zhi">
        <title>A novel member of SH(2) signaling protein family: cloning and characterization of SH(2)A gene.</title>
        <authorList>
            <person name="Dai S."/>
            <person name="Zhao Y."/>
            <person name="Ding Q."/>
        </authorList>
    </citation>
    <scope>NUCLEOTIDE SEQUENCE [MRNA] OF 172-454 (ISOFORM 1)</scope>
    <scope>TISSUE SPECIFICITY</scope>
    <source>
        <tissue>Liver</tissue>
    </source>
</reference>
<reference key="5">
    <citation type="journal article" date="2006" name="Cell">
        <title>Global, in vivo, and site-specific phosphorylation dynamics in signaling networks.</title>
        <authorList>
            <person name="Olsen J.V."/>
            <person name="Blagoev B."/>
            <person name="Gnad F."/>
            <person name="Macek B."/>
            <person name="Kumar C."/>
            <person name="Mortensen P."/>
            <person name="Mann M."/>
        </authorList>
    </citation>
    <scope>IDENTIFICATION BY MASS SPECTROMETRY [LARGE SCALE ANALYSIS]</scope>
    <source>
        <tissue>Cervix carcinoma</tissue>
    </source>
</reference>
<reference key="6">
    <citation type="journal article" date="2006" name="Nat. Biotechnol.">
        <title>A probability-based approach for high-throughput protein phosphorylation analysis and site localization.</title>
        <authorList>
            <person name="Beausoleil S.A."/>
            <person name="Villen J."/>
            <person name="Gerber S.A."/>
            <person name="Rush J."/>
            <person name="Gygi S.P."/>
        </authorList>
    </citation>
    <scope>PHOSPHORYLATION [LARGE SCALE ANALYSIS] AT SER-315</scope>
    <scope>IDENTIFICATION BY MASS SPECTROMETRY [LARGE SCALE ANALYSIS]</scope>
    <source>
        <tissue>Cervix carcinoma</tissue>
    </source>
</reference>
<reference key="7">
    <citation type="journal article" date="2008" name="J. Immunol.">
        <title>Genetic analysis of SH2D4A, a novel adapter protein related to T cell-specific adapter and adapter protein in lymphocytes of unknown function, reveals a redundant function in T cells.</title>
        <authorList>
            <person name="Lapinski P.E."/>
            <person name="Oliver J.A."/>
            <person name="Kamen L.A."/>
            <person name="Hughes E.D."/>
            <person name="Saunders T.L."/>
            <person name="King P.D."/>
        </authorList>
    </citation>
    <scope>FUNCTION</scope>
    <scope>SUBCELLULAR LOCATION</scope>
</reference>
<reference key="8">
    <citation type="journal article" date="2008" name="Proc. Natl. Acad. Sci. U.S.A.">
        <title>A quantitative atlas of mitotic phosphorylation.</title>
        <authorList>
            <person name="Dephoure N."/>
            <person name="Zhou C."/>
            <person name="Villen J."/>
            <person name="Beausoleil S.A."/>
            <person name="Bakalarski C.E."/>
            <person name="Elledge S.J."/>
            <person name="Gygi S.P."/>
        </authorList>
    </citation>
    <scope>PHOSPHORYLATION [LARGE SCALE ANALYSIS] AT SER-315</scope>
    <scope>IDENTIFICATION BY MASS SPECTROMETRY [LARGE SCALE ANALYSIS]</scope>
    <source>
        <tissue>Cervix carcinoma</tissue>
    </source>
</reference>
<reference key="9">
    <citation type="journal article" date="2009" name="BMB Rep.">
        <title>SH2D4A regulates cell proliferation via the ERalpha/PLC-gamma/PKC pathway.</title>
        <authorList>
            <person name="Li T."/>
            <person name="Li W."/>
            <person name="Lu J."/>
            <person name="Liu H."/>
            <person name="Li Y."/>
            <person name="Zhao Y."/>
        </authorList>
    </citation>
    <scope>FUNCTION</scope>
    <scope>INTERACTION WITH ESR1</scope>
</reference>
<reference key="10">
    <citation type="journal article" date="2010" name="Sci. Signal.">
        <title>Quantitative phosphoproteomics reveals widespread full phosphorylation site occupancy during mitosis.</title>
        <authorList>
            <person name="Olsen J.V."/>
            <person name="Vermeulen M."/>
            <person name="Santamaria A."/>
            <person name="Kumar C."/>
            <person name="Miller M.L."/>
            <person name="Jensen L.J."/>
            <person name="Gnad F."/>
            <person name="Cox J."/>
            <person name="Jensen T.S."/>
            <person name="Nigg E.A."/>
            <person name="Brunak S."/>
            <person name="Mann M."/>
        </authorList>
    </citation>
    <scope>PHOSPHORYLATION [LARGE SCALE ANALYSIS] AT SER-261 AND SER-315</scope>
    <scope>IDENTIFICATION BY MASS SPECTROMETRY [LARGE SCALE ANALYSIS]</scope>
    <source>
        <tissue>Cervix carcinoma</tissue>
    </source>
</reference>
<reference key="11">
    <citation type="journal article" date="2011" name="BMC Syst. Biol.">
        <title>Initial characterization of the human central proteome.</title>
        <authorList>
            <person name="Burkard T.R."/>
            <person name="Planyavsky M."/>
            <person name="Kaupe I."/>
            <person name="Breitwieser F.P."/>
            <person name="Buerckstuemmer T."/>
            <person name="Bennett K.L."/>
            <person name="Superti-Furga G."/>
            <person name="Colinge J."/>
        </authorList>
    </citation>
    <scope>IDENTIFICATION BY MASS SPECTROMETRY [LARGE SCALE ANALYSIS]</scope>
</reference>
<reference key="12">
    <citation type="journal article" date="2011" name="Sci. Signal.">
        <title>System-wide temporal characterization of the proteome and phosphoproteome of human embryonic stem cell differentiation.</title>
        <authorList>
            <person name="Rigbolt K.T."/>
            <person name="Prokhorova T.A."/>
            <person name="Akimov V."/>
            <person name="Henningsen J."/>
            <person name="Johansen P.T."/>
            <person name="Kratchmarova I."/>
            <person name="Kassem M."/>
            <person name="Mann M."/>
            <person name="Olsen J.V."/>
            <person name="Blagoev B."/>
        </authorList>
    </citation>
    <scope>PHOSPHORYLATION [LARGE SCALE ANALYSIS] AT SER-315</scope>
    <scope>IDENTIFICATION BY MASS SPECTROMETRY [LARGE SCALE ANALYSIS]</scope>
</reference>
<reference key="13">
    <citation type="journal article" date="2013" name="J. Proteome Res.">
        <title>Toward a comprehensive characterization of a human cancer cell phosphoproteome.</title>
        <authorList>
            <person name="Zhou H."/>
            <person name="Di Palma S."/>
            <person name="Preisinger C."/>
            <person name="Peng M."/>
            <person name="Polat A.N."/>
            <person name="Heck A.J."/>
            <person name="Mohammed S."/>
        </authorList>
    </citation>
    <scope>PHOSPHORYLATION [LARGE SCALE ANALYSIS] AT SER-124 AND SER-315</scope>
    <scope>IDENTIFICATION BY MASS SPECTROMETRY [LARGE SCALE ANALYSIS]</scope>
    <source>
        <tissue>Cervix carcinoma</tissue>
    </source>
</reference>
<reference key="14">
    <citation type="journal article" date="2014" name="J. Proteomics">
        <title>An enzyme assisted RP-RPLC approach for in-depth analysis of human liver phosphoproteome.</title>
        <authorList>
            <person name="Bian Y."/>
            <person name="Song C."/>
            <person name="Cheng K."/>
            <person name="Dong M."/>
            <person name="Wang F."/>
            <person name="Huang J."/>
            <person name="Sun D."/>
            <person name="Wang L."/>
            <person name="Ye M."/>
            <person name="Zou H."/>
        </authorList>
    </citation>
    <scope>PHOSPHORYLATION [LARGE SCALE ANALYSIS] AT SER-124</scope>
    <scope>IDENTIFICATION BY MASS SPECTROMETRY [LARGE SCALE ANALYSIS]</scope>
    <source>
        <tissue>Liver</tissue>
    </source>
</reference>
<accession>Q9H788</accession>
<accession>B4DDR1</accession>
<accession>Q5XKC1</accession>
<accession>Q6NXE9</accession>
<accession>Q86YM2</accession>
<accession>Q96C88</accession>
<accession>Q9H7F7</accession>
<keyword id="KW-0025">Alternative splicing</keyword>
<keyword id="KW-0963">Cytoplasm</keyword>
<keyword id="KW-0597">Phosphoprotein</keyword>
<keyword id="KW-1267">Proteomics identification</keyword>
<keyword id="KW-1185">Reference proteome</keyword>
<keyword id="KW-0727">SH2 domain</keyword>
<proteinExistence type="evidence at protein level"/>
<organism>
    <name type="scientific">Homo sapiens</name>
    <name type="common">Human</name>
    <dbReference type="NCBI Taxonomy" id="9606"/>
    <lineage>
        <taxon>Eukaryota</taxon>
        <taxon>Metazoa</taxon>
        <taxon>Chordata</taxon>
        <taxon>Craniata</taxon>
        <taxon>Vertebrata</taxon>
        <taxon>Euteleostomi</taxon>
        <taxon>Mammalia</taxon>
        <taxon>Eutheria</taxon>
        <taxon>Euarchontoglires</taxon>
        <taxon>Primates</taxon>
        <taxon>Haplorrhini</taxon>
        <taxon>Catarrhini</taxon>
        <taxon>Hominidae</taxon>
        <taxon>Homo</taxon>
    </lineage>
</organism>
<gene>
    <name type="primary">SH2D4A</name>
    <name type="synonym">PPP1R38</name>
    <name type="synonym">SH2A</name>
</gene>